<name>RL31_MYCGE</name>
<sequence length="97" mass="10954">MKKAIHFQSQPVVFNCASCNSNFTIDSTAKQKDLAIDICGKCHPFYIGQLTKQTVHGRAEKLSQKFNAGKAFLENKTKKSNQAKVEKQTRHRSINEL</sequence>
<keyword id="KW-1185">Reference proteome</keyword>
<keyword id="KW-0687">Ribonucleoprotein</keyword>
<keyword id="KW-0689">Ribosomal protein</keyword>
<keyword id="KW-0694">RNA-binding</keyword>
<keyword id="KW-0699">rRNA-binding</keyword>
<evidence type="ECO:0000255" key="1">
    <source>
        <dbReference type="HAMAP-Rule" id="MF_00501"/>
    </source>
</evidence>
<evidence type="ECO:0000256" key="2">
    <source>
        <dbReference type="SAM" id="MobiDB-lite"/>
    </source>
</evidence>
<evidence type="ECO:0000305" key="3"/>
<organism>
    <name type="scientific">Mycoplasma genitalium (strain ATCC 33530 / DSM 19775 / NCTC 10195 / G37)</name>
    <name type="common">Mycoplasmoides genitalium</name>
    <dbReference type="NCBI Taxonomy" id="243273"/>
    <lineage>
        <taxon>Bacteria</taxon>
        <taxon>Bacillati</taxon>
        <taxon>Mycoplasmatota</taxon>
        <taxon>Mycoplasmoidales</taxon>
        <taxon>Mycoplasmoidaceae</taxon>
        <taxon>Mycoplasmoides</taxon>
    </lineage>
</organism>
<comment type="function">
    <text evidence="1">Binds the 23S rRNA.</text>
</comment>
<comment type="subunit">
    <text evidence="1">Part of the 50S ribosomal subunit.</text>
</comment>
<comment type="similarity">
    <text evidence="1">Belongs to the bacterial ribosomal protein bL31 family. Type A subfamily.</text>
</comment>
<proteinExistence type="inferred from homology"/>
<gene>
    <name evidence="1" type="primary">rpmE</name>
    <name evidence="1" type="synonym">rpl31</name>
    <name type="ordered locus">MG257</name>
</gene>
<feature type="chain" id="PRO_0000173126" description="Large ribosomal subunit protein bL31">
    <location>
        <begin position="1"/>
        <end position="97"/>
    </location>
</feature>
<feature type="region of interest" description="Disordered" evidence="2">
    <location>
        <begin position="75"/>
        <end position="97"/>
    </location>
</feature>
<feature type="compositionally biased region" description="Basic and acidic residues" evidence="2">
    <location>
        <begin position="84"/>
        <end position="97"/>
    </location>
</feature>
<protein>
    <recommendedName>
        <fullName evidence="1">Large ribosomal subunit protein bL31</fullName>
    </recommendedName>
    <alternativeName>
        <fullName evidence="3">50S ribosomal protein L31</fullName>
    </alternativeName>
</protein>
<reference key="1">
    <citation type="journal article" date="1995" name="Science">
        <title>The minimal gene complement of Mycoplasma genitalium.</title>
        <authorList>
            <person name="Fraser C.M."/>
            <person name="Gocayne J.D."/>
            <person name="White O."/>
            <person name="Adams M.D."/>
            <person name="Clayton R.A."/>
            <person name="Fleischmann R.D."/>
            <person name="Bult C.J."/>
            <person name="Kerlavage A.R."/>
            <person name="Sutton G.G."/>
            <person name="Kelley J.M."/>
            <person name="Fritchman J.L."/>
            <person name="Weidman J.F."/>
            <person name="Small K.V."/>
            <person name="Sandusky M."/>
            <person name="Fuhrmann J.L."/>
            <person name="Nguyen D.T."/>
            <person name="Utterback T.R."/>
            <person name="Saudek D.M."/>
            <person name="Phillips C.A."/>
            <person name="Merrick J.M."/>
            <person name="Tomb J.-F."/>
            <person name="Dougherty B.A."/>
            <person name="Bott K.F."/>
            <person name="Hu P.-C."/>
            <person name="Lucier T.S."/>
            <person name="Peterson S.N."/>
            <person name="Smith H.O."/>
            <person name="Hutchison C.A. III"/>
            <person name="Venter J.C."/>
        </authorList>
    </citation>
    <scope>NUCLEOTIDE SEQUENCE [LARGE SCALE GENOMIC DNA]</scope>
    <source>
        <strain>ATCC 33530 / DSM 19775 / NCTC 10195 / G37</strain>
    </source>
</reference>
<accession>P47499</accession>
<dbReference type="EMBL" id="L43967">
    <property type="protein sequence ID" value="AAC71477.1"/>
    <property type="molecule type" value="Genomic_DNA"/>
</dbReference>
<dbReference type="PIR" id="D64228">
    <property type="entry name" value="D64228"/>
</dbReference>
<dbReference type="RefSeq" id="WP_010869398.1">
    <property type="nucleotide sequence ID" value="NC_000908.2"/>
</dbReference>
<dbReference type="FunCoup" id="P47499">
    <property type="interactions" value="115"/>
</dbReference>
<dbReference type="STRING" id="243273.MG_257"/>
<dbReference type="GeneID" id="88282406"/>
<dbReference type="KEGG" id="mge:MG_257"/>
<dbReference type="eggNOG" id="COG0254">
    <property type="taxonomic scope" value="Bacteria"/>
</dbReference>
<dbReference type="HOGENOM" id="CLU_114306_4_2_14"/>
<dbReference type="InParanoid" id="P47499"/>
<dbReference type="OrthoDB" id="9803251at2"/>
<dbReference type="BioCyc" id="MGEN243273:G1GJ2-307-MONOMER"/>
<dbReference type="Proteomes" id="UP000000807">
    <property type="component" value="Chromosome"/>
</dbReference>
<dbReference type="GO" id="GO:1990904">
    <property type="term" value="C:ribonucleoprotein complex"/>
    <property type="evidence" value="ECO:0007669"/>
    <property type="project" value="UniProtKB-KW"/>
</dbReference>
<dbReference type="GO" id="GO:0005840">
    <property type="term" value="C:ribosome"/>
    <property type="evidence" value="ECO:0007669"/>
    <property type="project" value="UniProtKB-KW"/>
</dbReference>
<dbReference type="GO" id="GO:0019843">
    <property type="term" value="F:rRNA binding"/>
    <property type="evidence" value="ECO:0007669"/>
    <property type="project" value="UniProtKB-KW"/>
</dbReference>
<dbReference type="GO" id="GO:0003735">
    <property type="term" value="F:structural constituent of ribosome"/>
    <property type="evidence" value="ECO:0007669"/>
    <property type="project" value="InterPro"/>
</dbReference>
<dbReference type="GO" id="GO:0006412">
    <property type="term" value="P:translation"/>
    <property type="evidence" value="ECO:0007669"/>
    <property type="project" value="UniProtKB-UniRule"/>
</dbReference>
<dbReference type="Gene3D" id="4.10.830.30">
    <property type="entry name" value="Ribosomal protein L31"/>
    <property type="match status" value="1"/>
</dbReference>
<dbReference type="HAMAP" id="MF_00501">
    <property type="entry name" value="Ribosomal_bL31_1"/>
    <property type="match status" value="1"/>
</dbReference>
<dbReference type="InterPro" id="IPR034704">
    <property type="entry name" value="Ribosomal_bL28/bL31-like_sf"/>
</dbReference>
<dbReference type="InterPro" id="IPR002150">
    <property type="entry name" value="Ribosomal_bL31"/>
</dbReference>
<dbReference type="InterPro" id="IPR027491">
    <property type="entry name" value="Ribosomal_bL31_A"/>
</dbReference>
<dbReference type="InterPro" id="IPR042105">
    <property type="entry name" value="Ribosomal_bL31_sf"/>
</dbReference>
<dbReference type="NCBIfam" id="TIGR00105">
    <property type="entry name" value="L31"/>
    <property type="match status" value="1"/>
</dbReference>
<dbReference type="NCBIfam" id="NF000612">
    <property type="entry name" value="PRK00019.1"/>
    <property type="match status" value="1"/>
</dbReference>
<dbReference type="PANTHER" id="PTHR33280">
    <property type="entry name" value="50S RIBOSOMAL PROTEIN L31, CHLOROPLASTIC"/>
    <property type="match status" value="1"/>
</dbReference>
<dbReference type="PANTHER" id="PTHR33280:SF1">
    <property type="entry name" value="LARGE RIBOSOMAL SUBUNIT PROTEIN BL31C"/>
    <property type="match status" value="1"/>
</dbReference>
<dbReference type="Pfam" id="PF01197">
    <property type="entry name" value="Ribosomal_L31"/>
    <property type="match status" value="1"/>
</dbReference>
<dbReference type="PRINTS" id="PR01249">
    <property type="entry name" value="RIBOSOMALL31"/>
</dbReference>
<dbReference type="SUPFAM" id="SSF143800">
    <property type="entry name" value="L28p-like"/>
    <property type="match status" value="1"/>
</dbReference>
<dbReference type="PROSITE" id="PS01143">
    <property type="entry name" value="RIBOSOMAL_L31"/>
    <property type="match status" value="1"/>
</dbReference>